<evidence type="ECO:0000255" key="1">
    <source>
        <dbReference type="HAMAP-Rule" id="MF_01037"/>
    </source>
</evidence>
<organism>
    <name type="scientific">Lactobacillus gasseri (strain ATCC 33323 / DSM 20243 / BCRC 14619 / CIP 102991 / JCM 1131 / KCTC 3163 / NCIMB 11718 / NCTC 13722 / AM63)</name>
    <dbReference type="NCBI Taxonomy" id="324831"/>
    <lineage>
        <taxon>Bacteria</taxon>
        <taxon>Bacillati</taxon>
        <taxon>Bacillota</taxon>
        <taxon>Bacilli</taxon>
        <taxon>Lactobacillales</taxon>
        <taxon>Lactobacillaceae</taxon>
        <taxon>Lactobacillus</taxon>
    </lineage>
</organism>
<proteinExistence type="inferred from homology"/>
<sequence length="438" mass="48330">MVKNVTVIGGGLAGSEAAWQLAKRGIEVELYEMRPKKTTPAHETANFAELVCTNSMRSNQLSNAVGLLKEEMRQLDSLIMKAADETAVPAGGALAVDRDKFSSVVTQTLKDLPNVHVHEEEITKIPKDGITIIATGPLTSDTLAEQIKDFCGTDSLHFFDAAAPIVAASSIDRDIVYKKSRYDKGEAAYLNCPMTKEEFFNFYKNLVSAETATLHGFEDKNVFEGCMPIEVMAKRGEKTMLFGPLKPVGLEDPKTGKTPYAVVQLRQDNAASTMYNIVGFQTHLKYGEQKRVFSMIPGLENAKFVRYGKMHRNTYIASPEVLNANYEARKQAGLFFAGQMTGVEGYVESAGSGLIAGINAARETVGEETLVFPKSTALGSMAHYITTTSAKHFQPMNASYALLPKLDYKVRNKQERHLEISKRALKDLETFKEEKKLD</sequence>
<gene>
    <name evidence="1" type="primary">trmFO</name>
    <name type="synonym">gid</name>
    <name type="ordered locus">LGAS_0917</name>
</gene>
<accession>Q043R6</accession>
<keyword id="KW-0963">Cytoplasm</keyword>
<keyword id="KW-0274">FAD</keyword>
<keyword id="KW-0285">Flavoprotein</keyword>
<keyword id="KW-0489">Methyltransferase</keyword>
<keyword id="KW-0520">NAD</keyword>
<keyword id="KW-0521">NADP</keyword>
<keyword id="KW-0808">Transferase</keyword>
<keyword id="KW-0819">tRNA processing</keyword>
<comment type="function">
    <text evidence="1">Catalyzes the folate-dependent formation of 5-methyl-uridine at position 54 (M-5-U54) in all tRNAs.</text>
</comment>
<comment type="catalytic activity">
    <reaction evidence="1">
        <text>uridine(54) in tRNA + (6R)-5,10-methylene-5,6,7,8-tetrahydrofolate + NADH + H(+) = 5-methyluridine(54) in tRNA + (6S)-5,6,7,8-tetrahydrofolate + NAD(+)</text>
        <dbReference type="Rhea" id="RHEA:16873"/>
        <dbReference type="Rhea" id="RHEA-COMP:10167"/>
        <dbReference type="Rhea" id="RHEA-COMP:10193"/>
        <dbReference type="ChEBI" id="CHEBI:15378"/>
        <dbReference type="ChEBI" id="CHEBI:15636"/>
        <dbReference type="ChEBI" id="CHEBI:57453"/>
        <dbReference type="ChEBI" id="CHEBI:57540"/>
        <dbReference type="ChEBI" id="CHEBI:57945"/>
        <dbReference type="ChEBI" id="CHEBI:65315"/>
        <dbReference type="ChEBI" id="CHEBI:74447"/>
        <dbReference type="EC" id="2.1.1.74"/>
    </reaction>
</comment>
<comment type="catalytic activity">
    <reaction evidence="1">
        <text>uridine(54) in tRNA + (6R)-5,10-methylene-5,6,7,8-tetrahydrofolate + NADPH + H(+) = 5-methyluridine(54) in tRNA + (6S)-5,6,7,8-tetrahydrofolate + NADP(+)</text>
        <dbReference type="Rhea" id="RHEA:62372"/>
        <dbReference type="Rhea" id="RHEA-COMP:10167"/>
        <dbReference type="Rhea" id="RHEA-COMP:10193"/>
        <dbReference type="ChEBI" id="CHEBI:15378"/>
        <dbReference type="ChEBI" id="CHEBI:15636"/>
        <dbReference type="ChEBI" id="CHEBI:57453"/>
        <dbReference type="ChEBI" id="CHEBI:57783"/>
        <dbReference type="ChEBI" id="CHEBI:58349"/>
        <dbReference type="ChEBI" id="CHEBI:65315"/>
        <dbReference type="ChEBI" id="CHEBI:74447"/>
        <dbReference type="EC" id="2.1.1.74"/>
    </reaction>
</comment>
<comment type="cofactor">
    <cofactor evidence="1">
        <name>FAD</name>
        <dbReference type="ChEBI" id="CHEBI:57692"/>
    </cofactor>
</comment>
<comment type="subcellular location">
    <subcellularLocation>
        <location evidence="1">Cytoplasm</location>
    </subcellularLocation>
</comment>
<comment type="similarity">
    <text evidence="1">Belongs to the MnmG family. TrmFO subfamily.</text>
</comment>
<protein>
    <recommendedName>
        <fullName evidence="1">Methylenetetrahydrofolate--tRNA-(uracil-5-)-methyltransferase TrmFO</fullName>
        <ecNumber evidence="1">2.1.1.74</ecNumber>
    </recommendedName>
    <alternativeName>
        <fullName evidence="1">Folate-dependent tRNA (uracil-5-)-methyltransferase</fullName>
    </alternativeName>
    <alternativeName>
        <fullName evidence="1">Folate-dependent tRNA(M-5-U54)-methyltransferase</fullName>
    </alternativeName>
</protein>
<feature type="chain" id="PRO_1000063917" description="Methylenetetrahydrofolate--tRNA-(uracil-5-)-methyltransferase TrmFO">
    <location>
        <begin position="1"/>
        <end position="438"/>
    </location>
</feature>
<feature type="binding site" evidence="1">
    <location>
        <begin position="9"/>
        <end position="14"/>
    </location>
    <ligand>
        <name>FAD</name>
        <dbReference type="ChEBI" id="CHEBI:57692"/>
    </ligand>
</feature>
<dbReference type="EC" id="2.1.1.74" evidence="1"/>
<dbReference type="EMBL" id="CP000413">
    <property type="protein sequence ID" value="ABJ60306.1"/>
    <property type="molecule type" value="Genomic_DNA"/>
</dbReference>
<dbReference type="RefSeq" id="WP_003647373.1">
    <property type="nucleotide sequence ID" value="NZ_WBMG01000014.1"/>
</dbReference>
<dbReference type="SMR" id="Q043R6"/>
<dbReference type="GeneID" id="29638415"/>
<dbReference type="KEGG" id="lga:LGAS_0917"/>
<dbReference type="HOGENOM" id="CLU_033057_1_0_9"/>
<dbReference type="BioCyc" id="LGAS324831:G1G6Y-911-MONOMER"/>
<dbReference type="Proteomes" id="UP000000664">
    <property type="component" value="Chromosome"/>
</dbReference>
<dbReference type="GO" id="GO:0005829">
    <property type="term" value="C:cytosol"/>
    <property type="evidence" value="ECO:0007669"/>
    <property type="project" value="TreeGrafter"/>
</dbReference>
<dbReference type="GO" id="GO:0050660">
    <property type="term" value="F:flavin adenine dinucleotide binding"/>
    <property type="evidence" value="ECO:0007669"/>
    <property type="project" value="UniProtKB-UniRule"/>
</dbReference>
<dbReference type="GO" id="GO:0047151">
    <property type="term" value="F:tRNA (uracil(54)-C5)-methyltransferase activity, 5,10-methylenetetrahydrofolate-dependent"/>
    <property type="evidence" value="ECO:0007669"/>
    <property type="project" value="UniProtKB-UniRule"/>
</dbReference>
<dbReference type="GO" id="GO:0030488">
    <property type="term" value="P:tRNA methylation"/>
    <property type="evidence" value="ECO:0007669"/>
    <property type="project" value="TreeGrafter"/>
</dbReference>
<dbReference type="GO" id="GO:0002098">
    <property type="term" value="P:tRNA wobble uridine modification"/>
    <property type="evidence" value="ECO:0007669"/>
    <property type="project" value="TreeGrafter"/>
</dbReference>
<dbReference type="FunFam" id="3.50.50.60:FF:000035">
    <property type="entry name" value="Methylenetetrahydrofolate--tRNA-(uracil-5-)-methyltransferase TrmFO"/>
    <property type="match status" value="1"/>
</dbReference>
<dbReference type="FunFam" id="3.50.50.60:FF:000040">
    <property type="entry name" value="Methylenetetrahydrofolate--tRNA-(uracil-5-)-methyltransferase TrmFO"/>
    <property type="match status" value="1"/>
</dbReference>
<dbReference type="Gene3D" id="3.50.50.60">
    <property type="entry name" value="FAD/NAD(P)-binding domain"/>
    <property type="match status" value="2"/>
</dbReference>
<dbReference type="HAMAP" id="MF_01037">
    <property type="entry name" value="TrmFO"/>
    <property type="match status" value="1"/>
</dbReference>
<dbReference type="InterPro" id="IPR036188">
    <property type="entry name" value="FAD/NAD-bd_sf"/>
</dbReference>
<dbReference type="InterPro" id="IPR002218">
    <property type="entry name" value="MnmG-rel"/>
</dbReference>
<dbReference type="InterPro" id="IPR020595">
    <property type="entry name" value="MnmG-rel_CS"/>
</dbReference>
<dbReference type="InterPro" id="IPR040131">
    <property type="entry name" value="MnmG_N"/>
</dbReference>
<dbReference type="InterPro" id="IPR004417">
    <property type="entry name" value="TrmFO"/>
</dbReference>
<dbReference type="NCBIfam" id="TIGR00137">
    <property type="entry name" value="gid_trmFO"/>
    <property type="match status" value="1"/>
</dbReference>
<dbReference type="NCBIfam" id="NF003739">
    <property type="entry name" value="PRK05335.1"/>
    <property type="match status" value="1"/>
</dbReference>
<dbReference type="PANTHER" id="PTHR11806">
    <property type="entry name" value="GLUCOSE INHIBITED DIVISION PROTEIN A"/>
    <property type="match status" value="1"/>
</dbReference>
<dbReference type="PANTHER" id="PTHR11806:SF2">
    <property type="entry name" value="METHYLENETETRAHYDROFOLATE--TRNA-(URACIL-5-)-METHYLTRANSFERASE TRMFO"/>
    <property type="match status" value="1"/>
</dbReference>
<dbReference type="Pfam" id="PF01134">
    <property type="entry name" value="GIDA"/>
    <property type="match status" value="1"/>
</dbReference>
<dbReference type="SUPFAM" id="SSF51905">
    <property type="entry name" value="FAD/NAD(P)-binding domain"/>
    <property type="match status" value="1"/>
</dbReference>
<dbReference type="PROSITE" id="PS01281">
    <property type="entry name" value="GIDA_2"/>
    <property type="match status" value="1"/>
</dbReference>
<name>TRMFO_LACGA</name>
<reference key="1">
    <citation type="journal article" date="2006" name="Proc. Natl. Acad. Sci. U.S.A.">
        <title>Comparative genomics of the lactic acid bacteria.</title>
        <authorList>
            <person name="Makarova K.S."/>
            <person name="Slesarev A."/>
            <person name="Wolf Y.I."/>
            <person name="Sorokin A."/>
            <person name="Mirkin B."/>
            <person name="Koonin E.V."/>
            <person name="Pavlov A."/>
            <person name="Pavlova N."/>
            <person name="Karamychev V."/>
            <person name="Polouchine N."/>
            <person name="Shakhova V."/>
            <person name="Grigoriev I."/>
            <person name="Lou Y."/>
            <person name="Rohksar D."/>
            <person name="Lucas S."/>
            <person name="Huang K."/>
            <person name="Goodstein D.M."/>
            <person name="Hawkins T."/>
            <person name="Plengvidhya V."/>
            <person name="Welker D."/>
            <person name="Hughes J."/>
            <person name="Goh Y."/>
            <person name="Benson A."/>
            <person name="Baldwin K."/>
            <person name="Lee J.-H."/>
            <person name="Diaz-Muniz I."/>
            <person name="Dosti B."/>
            <person name="Smeianov V."/>
            <person name="Wechter W."/>
            <person name="Barabote R."/>
            <person name="Lorca G."/>
            <person name="Altermann E."/>
            <person name="Barrangou R."/>
            <person name="Ganesan B."/>
            <person name="Xie Y."/>
            <person name="Rawsthorne H."/>
            <person name="Tamir D."/>
            <person name="Parker C."/>
            <person name="Breidt F."/>
            <person name="Broadbent J.R."/>
            <person name="Hutkins R."/>
            <person name="O'Sullivan D."/>
            <person name="Steele J."/>
            <person name="Unlu G."/>
            <person name="Saier M.H. Jr."/>
            <person name="Klaenhammer T."/>
            <person name="Richardson P."/>
            <person name="Kozyavkin S."/>
            <person name="Weimer B.C."/>
            <person name="Mills D.A."/>
        </authorList>
    </citation>
    <scope>NUCLEOTIDE SEQUENCE [LARGE SCALE GENOMIC DNA]</scope>
    <source>
        <strain>ATCC 33323 / DSM 20243 / BCRC 14619 / CIP 102991 / JCM 1131 / KCTC 3163 / NCIMB 11718 / NCTC 13722 / AM63</strain>
    </source>
</reference>